<sequence length="224" mass="24310">MKLVIKVTGKFFDDQGDKTPLSSAIRSLVQEGHRVALVTGGGTTARKYISLGRSLNLNEASLDLLGIWVARLNAFLMALSMPDLAYSRIPESLEQFLEYWGHGKVVVVGGFQPGQSTAAVSALVAEAISADYLVMVTTVEGVFDSDPKKNPNAKFLPRVTTTELKSILENTQSVKAGTYELLDPMAMKIVERSRIKVIVTSVDKIGKLTRIIKGEETASIVEPV</sequence>
<proteinExistence type="inferred from homology"/>
<accession>A4YHL6</accession>
<keyword id="KW-0067">ATP-binding</keyword>
<keyword id="KW-0963">Cytoplasm</keyword>
<keyword id="KW-0418">Kinase</keyword>
<keyword id="KW-0547">Nucleotide-binding</keyword>
<keyword id="KW-0665">Pyrimidine biosynthesis</keyword>
<keyword id="KW-1185">Reference proteome</keyword>
<keyword id="KW-0808">Transferase</keyword>
<comment type="function">
    <text evidence="1">Catalyzes the reversible phosphorylation of UMP to UDP.</text>
</comment>
<comment type="catalytic activity">
    <reaction evidence="1">
        <text>UMP + ATP = UDP + ADP</text>
        <dbReference type="Rhea" id="RHEA:24400"/>
        <dbReference type="ChEBI" id="CHEBI:30616"/>
        <dbReference type="ChEBI" id="CHEBI:57865"/>
        <dbReference type="ChEBI" id="CHEBI:58223"/>
        <dbReference type="ChEBI" id="CHEBI:456216"/>
        <dbReference type="EC" id="2.7.4.22"/>
    </reaction>
</comment>
<comment type="activity regulation">
    <text evidence="1">Inhibited by UTP.</text>
</comment>
<comment type="pathway">
    <text evidence="1">Pyrimidine metabolism; CTP biosynthesis via de novo pathway; UDP from UMP (UMPK route): step 1/1.</text>
</comment>
<comment type="subunit">
    <text evidence="1">Homohexamer.</text>
</comment>
<comment type="subcellular location">
    <subcellularLocation>
        <location evidence="1">Cytoplasm</location>
    </subcellularLocation>
</comment>
<comment type="similarity">
    <text evidence="1">Belongs to the UMP kinase family.</text>
</comment>
<gene>
    <name evidence="1" type="primary">pyrH</name>
    <name type="ordered locus">Msed_1763</name>
</gene>
<dbReference type="EC" id="2.7.4.22" evidence="1"/>
<dbReference type="EMBL" id="CP000682">
    <property type="protein sequence ID" value="ABP95918.1"/>
    <property type="molecule type" value="Genomic_DNA"/>
</dbReference>
<dbReference type="RefSeq" id="WP_012021705.1">
    <property type="nucleotide sequence ID" value="NC_009440.1"/>
</dbReference>
<dbReference type="SMR" id="A4YHL6"/>
<dbReference type="STRING" id="399549.Msed_1763"/>
<dbReference type="GeneID" id="91756275"/>
<dbReference type="KEGG" id="mse:Msed_1763"/>
<dbReference type="eggNOG" id="arCOG00858">
    <property type="taxonomic scope" value="Archaea"/>
</dbReference>
<dbReference type="HOGENOM" id="CLU_079546_0_0_2"/>
<dbReference type="UniPathway" id="UPA00159">
    <property type="reaction ID" value="UER00275"/>
</dbReference>
<dbReference type="Proteomes" id="UP000000242">
    <property type="component" value="Chromosome"/>
</dbReference>
<dbReference type="GO" id="GO:0005737">
    <property type="term" value="C:cytoplasm"/>
    <property type="evidence" value="ECO:0007669"/>
    <property type="project" value="UniProtKB-SubCell"/>
</dbReference>
<dbReference type="GO" id="GO:0005524">
    <property type="term" value="F:ATP binding"/>
    <property type="evidence" value="ECO:0007669"/>
    <property type="project" value="UniProtKB-KW"/>
</dbReference>
<dbReference type="GO" id="GO:0033862">
    <property type="term" value="F:UMP kinase activity"/>
    <property type="evidence" value="ECO:0007669"/>
    <property type="project" value="UniProtKB-EC"/>
</dbReference>
<dbReference type="GO" id="GO:0044210">
    <property type="term" value="P:'de novo' CTP biosynthetic process"/>
    <property type="evidence" value="ECO:0007669"/>
    <property type="project" value="UniProtKB-UniRule"/>
</dbReference>
<dbReference type="GO" id="GO:0006225">
    <property type="term" value="P:UDP biosynthetic process"/>
    <property type="evidence" value="ECO:0007669"/>
    <property type="project" value="TreeGrafter"/>
</dbReference>
<dbReference type="Gene3D" id="3.40.1160.10">
    <property type="entry name" value="Acetylglutamate kinase-like"/>
    <property type="match status" value="1"/>
</dbReference>
<dbReference type="HAMAP" id="MF_01220_A">
    <property type="entry name" value="PyrH_A"/>
    <property type="match status" value="1"/>
</dbReference>
<dbReference type="InterPro" id="IPR036393">
    <property type="entry name" value="AceGlu_kinase-like_sf"/>
</dbReference>
<dbReference type="InterPro" id="IPR001048">
    <property type="entry name" value="Asp/Glu/Uridylate_kinase"/>
</dbReference>
<dbReference type="InterPro" id="IPR011817">
    <property type="entry name" value="Uridylate_kinase"/>
</dbReference>
<dbReference type="InterPro" id="IPR011818">
    <property type="entry name" value="Uridylate_kinase_arch/spir"/>
</dbReference>
<dbReference type="NCBIfam" id="TIGR02076">
    <property type="entry name" value="pyrH_arch"/>
    <property type="match status" value="1"/>
</dbReference>
<dbReference type="PANTHER" id="PTHR42833">
    <property type="entry name" value="URIDYLATE KINASE"/>
    <property type="match status" value="1"/>
</dbReference>
<dbReference type="PANTHER" id="PTHR42833:SF4">
    <property type="entry name" value="URIDYLATE KINASE PUMPKIN, CHLOROPLASTIC"/>
    <property type="match status" value="1"/>
</dbReference>
<dbReference type="Pfam" id="PF00696">
    <property type="entry name" value="AA_kinase"/>
    <property type="match status" value="1"/>
</dbReference>
<dbReference type="PIRSF" id="PIRSF005650">
    <property type="entry name" value="Uridylate_kin"/>
    <property type="match status" value="1"/>
</dbReference>
<dbReference type="SUPFAM" id="SSF53633">
    <property type="entry name" value="Carbamate kinase-like"/>
    <property type="match status" value="1"/>
</dbReference>
<evidence type="ECO:0000255" key="1">
    <source>
        <dbReference type="HAMAP-Rule" id="MF_01220"/>
    </source>
</evidence>
<reference key="1">
    <citation type="journal article" date="2008" name="Appl. Environ. Microbiol.">
        <title>The genome sequence of the metal-mobilizing, extremely thermoacidophilic archaeon Metallosphaera sedula provides insights into bioleaching-associated metabolism.</title>
        <authorList>
            <person name="Auernik K.S."/>
            <person name="Maezato Y."/>
            <person name="Blum P.H."/>
            <person name="Kelly R.M."/>
        </authorList>
    </citation>
    <scope>NUCLEOTIDE SEQUENCE [LARGE SCALE GENOMIC DNA]</scope>
    <source>
        <strain>ATCC 51363 / DSM 5348 / JCM 9185 / NBRC 15509 / TH2</strain>
    </source>
</reference>
<organism>
    <name type="scientific">Metallosphaera sedula (strain ATCC 51363 / DSM 5348 / JCM 9185 / NBRC 15509 / TH2)</name>
    <dbReference type="NCBI Taxonomy" id="399549"/>
    <lineage>
        <taxon>Archaea</taxon>
        <taxon>Thermoproteota</taxon>
        <taxon>Thermoprotei</taxon>
        <taxon>Sulfolobales</taxon>
        <taxon>Sulfolobaceae</taxon>
        <taxon>Metallosphaera</taxon>
    </lineage>
</organism>
<name>PYRH_METS5</name>
<protein>
    <recommendedName>
        <fullName evidence="1">Uridylate kinase</fullName>
        <shortName evidence="1">UK</shortName>
        <ecNumber evidence="1">2.7.4.22</ecNumber>
    </recommendedName>
    <alternativeName>
        <fullName evidence="1">Uridine monophosphate kinase</fullName>
        <shortName evidence="1">UMP kinase</shortName>
        <shortName evidence="1">UMPK</shortName>
    </alternativeName>
</protein>
<feature type="chain" id="PRO_1000073144" description="Uridylate kinase">
    <location>
        <begin position="1"/>
        <end position="224"/>
    </location>
</feature>
<feature type="binding site" evidence="1">
    <location>
        <begin position="6"/>
        <end position="10"/>
    </location>
    <ligand>
        <name>ATP</name>
        <dbReference type="ChEBI" id="CHEBI:30616"/>
    </ligand>
</feature>
<feature type="binding site" evidence="1">
    <location>
        <position position="41"/>
    </location>
    <ligand>
        <name>UMP</name>
        <dbReference type="ChEBI" id="CHEBI:57865"/>
    </ligand>
</feature>
<feature type="binding site" evidence="1">
    <location>
        <position position="42"/>
    </location>
    <ligand>
        <name>ATP</name>
        <dbReference type="ChEBI" id="CHEBI:30616"/>
    </ligand>
</feature>
<feature type="binding site" evidence="1">
    <location>
        <position position="46"/>
    </location>
    <ligand>
        <name>ATP</name>
        <dbReference type="ChEBI" id="CHEBI:30616"/>
    </ligand>
</feature>
<feature type="binding site" evidence="1">
    <location>
        <position position="63"/>
    </location>
    <ligand>
        <name>UMP</name>
        <dbReference type="ChEBI" id="CHEBI:57865"/>
    </ligand>
</feature>
<feature type="binding site" evidence="1">
    <location>
        <begin position="111"/>
        <end position="117"/>
    </location>
    <ligand>
        <name>UMP</name>
        <dbReference type="ChEBI" id="CHEBI:57865"/>
    </ligand>
</feature>
<feature type="binding site" evidence="1">
    <location>
        <position position="137"/>
    </location>
    <ligand>
        <name>ATP</name>
        <dbReference type="ChEBI" id="CHEBI:30616"/>
    </ligand>
</feature>
<feature type="binding site" evidence="1">
    <location>
        <position position="143"/>
    </location>
    <ligand>
        <name>ATP</name>
        <dbReference type="ChEBI" id="CHEBI:30616"/>
    </ligand>
</feature>
<feature type="binding site" evidence="1">
    <location>
        <position position="146"/>
    </location>
    <ligand>
        <name>ATP</name>
        <dbReference type="ChEBI" id="CHEBI:30616"/>
    </ligand>
</feature>